<comment type="miscellaneous">
    <text>This chain was isolated from a myeloma protein that bind galactan.</text>
</comment>
<name>KV6A5_MOUSE</name>
<sequence length="107" mass="11502">EIVLTQSPAITAASLGQKVTITCSASSSVSSLHWYQQKSGTSPKPWIYEISKLASGVPARFSGSGSGTSYSLTINTMEAEDAAIYYCQQWTYPLITFGAGTKLELKR</sequence>
<feature type="chain" id="PRO_0000059814" description="Ig kappa chain V-VI region J539">
    <location>
        <begin position="1"/>
        <end position="107" status="greater than"/>
    </location>
</feature>
<feature type="region of interest" description="Framework-1">
    <location>
        <begin position="1"/>
        <end position="23"/>
    </location>
</feature>
<feature type="region of interest" description="Complementarity-determining-1">
    <location>
        <begin position="24"/>
        <end position="33"/>
    </location>
</feature>
<feature type="region of interest" description="Framework-2">
    <location>
        <begin position="34"/>
        <end position="48"/>
    </location>
</feature>
<feature type="region of interest" description="Complementarity-determining-2">
    <location>
        <begin position="49"/>
        <end position="55"/>
    </location>
</feature>
<feature type="region of interest" description="Framework-3">
    <location>
        <begin position="56"/>
        <end position="87"/>
    </location>
</feature>
<feature type="region of interest" description="Complementarity-determining-3">
    <location>
        <begin position="88"/>
        <end position="96"/>
    </location>
</feature>
<feature type="region of interest" description="Framework-4">
    <location>
        <begin position="97"/>
        <end position="106"/>
    </location>
</feature>
<feature type="disulfide bond">
    <location>
        <begin position="23"/>
        <end position="87"/>
    </location>
</feature>
<feature type="non-terminal residue">
    <location>
        <position position="107"/>
    </location>
</feature>
<feature type="strand" evidence="1">
    <location>
        <begin position="4"/>
        <end position="14"/>
    </location>
</feature>
<feature type="strand" evidence="1">
    <location>
        <begin position="19"/>
        <end position="27"/>
    </location>
</feature>
<feature type="strand" evidence="1">
    <location>
        <begin position="30"/>
        <end position="37"/>
    </location>
</feature>
<feature type="strand" evidence="1">
    <location>
        <begin position="44"/>
        <end position="48"/>
    </location>
</feature>
<feature type="turn" evidence="1">
    <location>
        <begin position="49"/>
        <end position="51"/>
    </location>
</feature>
<feature type="strand" evidence="1">
    <location>
        <begin position="61"/>
        <end position="66"/>
    </location>
</feature>
<feature type="strand" evidence="1">
    <location>
        <begin position="69"/>
        <end position="76"/>
    </location>
</feature>
<feature type="helix" evidence="1">
    <location>
        <begin position="79"/>
        <end position="81"/>
    </location>
</feature>
<feature type="strand" evidence="1">
    <location>
        <begin position="83"/>
        <end position="91"/>
    </location>
</feature>
<feature type="strand" evidence="1">
    <location>
        <begin position="101"/>
        <end position="106"/>
    </location>
</feature>
<accession>P01679</accession>
<keyword id="KW-0002">3D-structure</keyword>
<keyword id="KW-1064">Adaptive immunity</keyword>
<keyword id="KW-0903">Direct protein sequencing</keyword>
<keyword id="KW-1015">Disulfide bond</keyword>
<keyword id="KW-0391">Immunity</keyword>
<keyword id="KW-1280">Immunoglobulin</keyword>
<keyword id="KW-1185">Reference proteome</keyword>
<reference key="1">
    <citation type="journal article" date="1980" name="Proc. Natl. Acad. Sci. U.S.A.">
        <title>Kappa chain joining segments and structural diversity of antibody combining sites.</title>
        <authorList>
            <person name="Rudikoff S."/>
            <person name="Rao D.N."/>
            <person name="Glaudemans C.P.J."/>
            <person name="Potter M."/>
        </authorList>
    </citation>
    <scope>PROTEIN SEQUENCE</scope>
</reference>
<reference key="2">
    <citation type="journal article" date="1986" name="Proteins">
        <title>The galactan-binding immunoglobulin Fab J539: an X-ray diffraction study at 2.6-A resolution.</title>
        <authorList>
            <person name="Suh S.W."/>
            <person name="Bhat T.N."/>
            <person name="Navia M.A."/>
            <person name="Cohen G.H."/>
            <person name="Rao D.N."/>
            <person name="Rudikoff S."/>
            <person name="Davies D.R."/>
        </authorList>
    </citation>
    <scope>X-RAY CRYSTALLOGRAPHY (2.6 ANGSTROMS)</scope>
</reference>
<dbReference type="PIR" id="A01942">
    <property type="entry name" value="KVMSJ5"/>
</dbReference>
<dbReference type="PDB" id="2FBJ">
    <property type="method" value="X-ray"/>
    <property type="resolution" value="1.95 A"/>
    <property type="chains" value="L=1-107"/>
</dbReference>
<dbReference type="PDBsum" id="2FBJ"/>
<dbReference type="SMR" id="P01679"/>
<dbReference type="FunCoup" id="P01679">
    <property type="interactions" value="534"/>
</dbReference>
<dbReference type="InParanoid" id="P01679"/>
<dbReference type="EvolutionaryTrace" id="P01679"/>
<dbReference type="Proteomes" id="UP000000589">
    <property type="component" value="Unplaced"/>
</dbReference>
<dbReference type="RNAct" id="P01679">
    <property type="molecule type" value="protein"/>
</dbReference>
<dbReference type="GO" id="GO:0019814">
    <property type="term" value="C:immunoglobulin complex"/>
    <property type="evidence" value="ECO:0000318"/>
    <property type="project" value="GO_Central"/>
</dbReference>
<dbReference type="GO" id="GO:0002250">
    <property type="term" value="P:adaptive immune response"/>
    <property type="evidence" value="ECO:0007669"/>
    <property type="project" value="UniProtKB-KW"/>
</dbReference>
<dbReference type="GO" id="GO:0006955">
    <property type="term" value="P:immune response"/>
    <property type="evidence" value="ECO:0000318"/>
    <property type="project" value="GO_Central"/>
</dbReference>
<dbReference type="FunFam" id="2.60.40.10:FF:001317">
    <property type="entry name" value="Immunoglobulin kappa chain variable 4-54"/>
    <property type="match status" value="1"/>
</dbReference>
<dbReference type="Gene3D" id="2.60.40.10">
    <property type="entry name" value="Immunoglobulins"/>
    <property type="match status" value="1"/>
</dbReference>
<dbReference type="InterPro" id="IPR007110">
    <property type="entry name" value="Ig-like_dom"/>
</dbReference>
<dbReference type="InterPro" id="IPR036179">
    <property type="entry name" value="Ig-like_dom_sf"/>
</dbReference>
<dbReference type="InterPro" id="IPR013783">
    <property type="entry name" value="Ig-like_fold"/>
</dbReference>
<dbReference type="InterPro" id="IPR003599">
    <property type="entry name" value="Ig_sub"/>
</dbReference>
<dbReference type="InterPro" id="IPR013106">
    <property type="entry name" value="Ig_V-set"/>
</dbReference>
<dbReference type="InterPro" id="IPR050150">
    <property type="entry name" value="IgV_Light_Chain"/>
</dbReference>
<dbReference type="PANTHER" id="PTHR23267">
    <property type="entry name" value="IMMUNOGLOBULIN LIGHT CHAIN"/>
    <property type="match status" value="1"/>
</dbReference>
<dbReference type="Pfam" id="PF07686">
    <property type="entry name" value="V-set"/>
    <property type="match status" value="1"/>
</dbReference>
<dbReference type="SMART" id="SM00409">
    <property type="entry name" value="IG"/>
    <property type="match status" value="1"/>
</dbReference>
<dbReference type="SMART" id="SM00406">
    <property type="entry name" value="IGv"/>
    <property type="match status" value="1"/>
</dbReference>
<dbReference type="SUPFAM" id="SSF48726">
    <property type="entry name" value="Immunoglobulin"/>
    <property type="match status" value="1"/>
</dbReference>
<dbReference type="PROSITE" id="PS50835">
    <property type="entry name" value="IG_LIKE"/>
    <property type="match status" value="1"/>
</dbReference>
<organism>
    <name type="scientific">Mus musculus</name>
    <name type="common">Mouse</name>
    <dbReference type="NCBI Taxonomy" id="10090"/>
    <lineage>
        <taxon>Eukaryota</taxon>
        <taxon>Metazoa</taxon>
        <taxon>Chordata</taxon>
        <taxon>Craniata</taxon>
        <taxon>Vertebrata</taxon>
        <taxon>Euteleostomi</taxon>
        <taxon>Mammalia</taxon>
        <taxon>Eutheria</taxon>
        <taxon>Euarchontoglires</taxon>
        <taxon>Glires</taxon>
        <taxon>Rodentia</taxon>
        <taxon>Myomorpha</taxon>
        <taxon>Muroidea</taxon>
        <taxon>Muridae</taxon>
        <taxon>Murinae</taxon>
        <taxon>Mus</taxon>
        <taxon>Mus</taxon>
    </lineage>
</organism>
<evidence type="ECO:0007829" key="1">
    <source>
        <dbReference type="PDB" id="2FBJ"/>
    </source>
</evidence>
<proteinExistence type="evidence at protein level"/>
<protein>
    <recommendedName>
        <fullName>Ig kappa chain V-VI region J539</fullName>
    </recommendedName>
</protein>